<keyword id="KW-0378">Hydrolase</keyword>
<keyword id="KW-0659">Purine metabolism</keyword>
<keyword id="KW-1185">Reference proteome</keyword>
<comment type="function">
    <text>Utilization of purines as secondary nitrogen sources, when primary sources are limiting.</text>
</comment>
<comment type="catalytic activity">
    <reaction>
        <text>allantoate + H2O = (S)-ureidoglycolate + urea</text>
        <dbReference type="Rhea" id="RHEA:11016"/>
        <dbReference type="ChEBI" id="CHEBI:15377"/>
        <dbReference type="ChEBI" id="CHEBI:16199"/>
        <dbReference type="ChEBI" id="CHEBI:17536"/>
        <dbReference type="ChEBI" id="CHEBI:57296"/>
        <dbReference type="EC" id="3.5.3.4"/>
    </reaction>
</comment>
<comment type="pathway">
    <text>Nitrogen metabolism; (S)-allantoin degradation; (S)-ureidoglycolate from allantoate (aminidohydrolase route): step 1/1.</text>
</comment>
<comment type="induction">
    <text>Induced by uric acid. Repressed by nitrogen.</text>
</comment>
<comment type="similarity">
    <text evidence="1">Belongs to the allantoicase family.</text>
</comment>
<evidence type="ECO:0000305" key="1"/>
<organism>
    <name type="scientific">Neurospora crassa (strain ATCC 24698 / 74-OR23-1A / CBS 708.71 / DSM 1257 / FGSC 987)</name>
    <dbReference type="NCBI Taxonomy" id="367110"/>
    <lineage>
        <taxon>Eukaryota</taxon>
        <taxon>Fungi</taxon>
        <taxon>Dikarya</taxon>
        <taxon>Ascomycota</taxon>
        <taxon>Pezizomycotina</taxon>
        <taxon>Sordariomycetes</taxon>
        <taxon>Sordariomycetidae</taxon>
        <taxon>Sordariales</taxon>
        <taxon>Sordariaceae</taxon>
        <taxon>Neurospora</taxon>
    </lineage>
</organism>
<feature type="chain" id="PRO_0000205912" description="Allantoicase">
    <location>
        <begin position="1"/>
        <end position="354"/>
    </location>
</feature>
<feature type="sequence conflict" description="In Ref. 1; AAA33556." evidence="1" ref="1">
    <original>L</original>
    <variation>S</variation>
    <location>
        <position position="42"/>
    </location>
</feature>
<feature type="sequence conflict" description="In Ref. 1; AAA33556." evidence="1" ref="1">
    <original>R</original>
    <variation>L</variation>
    <location>
        <position position="140"/>
    </location>
</feature>
<feature type="sequence conflict" description="In Ref. 1; AAA33556." evidence="1" ref="1">
    <original>G</original>
    <variation>C</variation>
    <location>
        <position position="159"/>
    </location>
</feature>
<feature type="sequence conflict" description="In Ref. 1; AAA33556." evidence="1" ref="1">
    <original>A</original>
    <variation>R</variation>
    <location>
        <position position="288"/>
    </location>
</feature>
<feature type="sequence conflict" description="In Ref. 1; AAA33556." evidence="1" ref="1">
    <original>E</original>
    <variation>R</variation>
    <location>
        <position position="296"/>
    </location>
</feature>
<gene>
    <name type="primary">alc-1</name>
    <name type="synonym">alc</name>
    <name type="ORF">B8B8.070</name>
    <name type="ORF">NCU01816</name>
</gene>
<dbReference type="EC" id="3.5.3.4"/>
<dbReference type="EMBL" id="J02927">
    <property type="protein sequence ID" value="AAA33556.1"/>
    <property type="molecule type" value="Genomic_DNA"/>
</dbReference>
<dbReference type="EMBL" id="BX284761">
    <property type="protein sequence ID" value="CAD70499.1"/>
    <property type="molecule type" value="Genomic_DNA"/>
</dbReference>
<dbReference type="EMBL" id="CM002237">
    <property type="protein sequence ID" value="EAA27258.1"/>
    <property type="molecule type" value="Genomic_DNA"/>
</dbReference>
<dbReference type="PIR" id="A35829">
    <property type="entry name" value="A35829"/>
</dbReference>
<dbReference type="RefSeq" id="XP_956494.1">
    <property type="nucleotide sequence ID" value="XM_951401.2"/>
</dbReference>
<dbReference type="SMR" id="P18407"/>
<dbReference type="FunCoup" id="P18407">
    <property type="interactions" value="50"/>
</dbReference>
<dbReference type="STRING" id="367110.P18407"/>
<dbReference type="PaxDb" id="5141-EFNCRP00000001652"/>
<dbReference type="EnsemblFungi" id="EAA27258">
    <property type="protein sequence ID" value="EAA27258"/>
    <property type="gene ID" value="NCU01816"/>
</dbReference>
<dbReference type="GeneID" id="3872616"/>
<dbReference type="KEGG" id="ncr:NCU01816"/>
<dbReference type="VEuPathDB" id="FungiDB:NCU01816"/>
<dbReference type="HOGENOM" id="CLU_038797_0_0_1"/>
<dbReference type="InParanoid" id="P18407"/>
<dbReference type="OrthoDB" id="10266039at2759"/>
<dbReference type="UniPathway" id="UPA00395">
    <property type="reaction ID" value="UER00654"/>
</dbReference>
<dbReference type="Proteomes" id="UP000001805">
    <property type="component" value="Chromosome 6, Linkage Group II"/>
</dbReference>
<dbReference type="GO" id="GO:0004037">
    <property type="term" value="F:allantoicase activity"/>
    <property type="evidence" value="ECO:0000318"/>
    <property type="project" value="GO_Central"/>
</dbReference>
<dbReference type="GO" id="GO:0000256">
    <property type="term" value="P:allantoin catabolic process"/>
    <property type="evidence" value="ECO:0000318"/>
    <property type="project" value="GO_Central"/>
</dbReference>
<dbReference type="GO" id="GO:0006144">
    <property type="term" value="P:purine nucleobase metabolic process"/>
    <property type="evidence" value="ECO:0007669"/>
    <property type="project" value="UniProtKB-KW"/>
</dbReference>
<dbReference type="FunFam" id="2.60.120.260:FF:000078">
    <property type="entry name" value="DAL2p Allantoicase"/>
    <property type="match status" value="1"/>
</dbReference>
<dbReference type="FunFam" id="2.60.120.260:FF:000059">
    <property type="entry name" value="Probable allantoicase"/>
    <property type="match status" value="1"/>
</dbReference>
<dbReference type="Gene3D" id="2.60.120.260">
    <property type="entry name" value="Galactose-binding domain-like"/>
    <property type="match status" value="2"/>
</dbReference>
<dbReference type="HAMAP" id="MF_00813">
    <property type="entry name" value="Allantoicase"/>
    <property type="match status" value="1"/>
</dbReference>
<dbReference type="InterPro" id="IPR005164">
    <property type="entry name" value="Allantoicase"/>
</dbReference>
<dbReference type="InterPro" id="IPR015908">
    <property type="entry name" value="Allantoicase_dom"/>
</dbReference>
<dbReference type="InterPro" id="IPR008979">
    <property type="entry name" value="Galactose-bd-like_sf"/>
</dbReference>
<dbReference type="NCBIfam" id="TIGR02961">
    <property type="entry name" value="allantoicase"/>
    <property type="match status" value="1"/>
</dbReference>
<dbReference type="PANTHER" id="PTHR12045">
    <property type="entry name" value="ALLANTOICASE"/>
    <property type="match status" value="1"/>
</dbReference>
<dbReference type="PANTHER" id="PTHR12045:SF3">
    <property type="entry name" value="INACTIVE ALLANTOICASE-RELATED"/>
    <property type="match status" value="1"/>
</dbReference>
<dbReference type="Pfam" id="PF03561">
    <property type="entry name" value="Allantoicase"/>
    <property type="match status" value="2"/>
</dbReference>
<dbReference type="PIRSF" id="PIRSF016516">
    <property type="entry name" value="Allantoicase"/>
    <property type="match status" value="1"/>
</dbReference>
<dbReference type="SUPFAM" id="SSF49785">
    <property type="entry name" value="Galactose-binding domain-like"/>
    <property type="match status" value="2"/>
</dbReference>
<protein>
    <recommendedName>
        <fullName>Allantoicase</fullName>
        <ecNumber>3.5.3.4</ecNumber>
    </recommendedName>
</protein>
<proteinExistence type="evidence at transcript level"/>
<name>ALLC_NEUCR</name>
<accession>P18407</accession>
<accession>Q7RXF0</accession>
<reference key="1">
    <citation type="journal article" date="1990" name="Biochemistry">
        <title>Nucleotide sequence and DNA recognition elements of alc, the structural gene which encodes allantoicase, a purine catabolic enzyme of Neurospora crassa.</title>
        <authorList>
            <person name="Lee H."/>
            <person name="Fu Y.H."/>
            <person name="Marzluf G.A."/>
        </authorList>
    </citation>
    <scope>NUCLEOTIDE SEQUENCE [GENOMIC DNA]</scope>
    <source>
        <strain>ATCC 24698 / 74-OR23-1A / CBS 708.71 / DSM 1257 / FGSC 987</strain>
    </source>
</reference>
<reference key="2">
    <citation type="journal article" date="2003" name="Nucleic Acids Res.">
        <title>What's in the genome of a filamentous fungus? Analysis of the Neurospora genome sequence.</title>
        <authorList>
            <person name="Mannhaupt G."/>
            <person name="Montrone C."/>
            <person name="Haase D."/>
            <person name="Mewes H.-W."/>
            <person name="Aign V."/>
            <person name="Hoheisel J.D."/>
            <person name="Fartmann B."/>
            <person name="Nyakatura G."/>
            <person name="Kempken F."/>
            <person name="Maier J."/>
            <person name="Schulte U."/>
        </authorList>
    </citation>
    <scope>NUCLEOTIDE SEQUENCE [LARGE SCALE GENOMIC DNA]</scope>
    <source>
        <strain>ATCC 24698 / 74-OR23-1A / CBS 708.71 / DSM 1257 / FGSC 987</strain>
    </source>
</reference>
<reference key="3">
    <citation type="journal article" date="2003" name="Nature">
        <title>The genome sequence of the filamentous fungus Neurospora crassa.</title>
        <authorList>
            <person name="Galagan J.E."/>
            <person name="Calvo S.E."/>
            <person name="Borkovich K.A."/>
            <person name="Selker E.U."/>
            <person name="Read N.D."/>
            <person name="Jaffe D.B."/>
            <person name="FitzHugh W."/>
            <person name="Ma L.-J."/>
            <person name="Smirnov S."/>
            <person name="Purcell S."/>
            <person name="Rehman B."/>
            <person name="Elkins T."/>
            <person name="Engels R."/>
            <person name="Wang S."/>
            <person name="Nielsen C.B."/>
            <person name="Butler J."/>
            <person name="Endrizzi M."/>
            <person name="Qui D."/>
            <person name="Ianakiev P."/>
            <person name="Bell-Pedersen D."/>
            <person name="Nelson M.A."/>
            <person name="Werner-Washburne M."/>
            <person name="Selitrennikoff C.P."/>
            <person name="Kinsey J.A."/>
            <person name="Braun E.L."/>
            <person name="Zelter A."/>
            <person name="Schulte U."/>
            <person name="Kothe G.O."/>
            <person name="Jedd G."/>
            <person name="Mewes H.-W."/>
            <person name="Staben C."/>
            <person name="Marcotte E."/>
            <person name="Greenberg D."/>
            <person name="Roy A."/>
            <person name="Foley K."/>
            <person name="Naylor J."/>
            <person name="Stange-Thomann N."/>
            <person name="Barrett R."/>
            <person name="Gnerre S."/>
            <person name="Kamal M."/>
            <person name="Kamvysselis M."/>
            <person name="Mauceli E.W."/>
            <person name="Bielke C."/>
            <person name="Rudd S."/>
            <person name="Frishman D."/>
            <person name="Krystofova S."/>
            <person name="Rasmussen C."/>
            <person name="Metzenberg R.L."/>
            <person name="Perkins D.D."/>
            <person name="Kroken S."/>
            <person name="Cogoni C."/>
            <person name="Macino G."/>
            <person name="Catcheside D.E.A."/>
            <person name="Li W."/>
            <person name="Pratt R.J."/>
            <person name="Osmani S.A."/>
            <person name="DeSouza C.P.C."/>
            <person name="Glass N.L."/>
            <person name="Orbach M.J."/>
            <person name="Berglund J.A."/>
            <person name="Voelker R."/>
            <person name="Yarden O."/>
            <person name="Plamann M."/>
            <person name="Seiler S."/>
            <person name="Dunlap J.C."/>
            <person name="Radford A."/>
            <person name="Aramayo R."/>
            <person name="Natvig D.O."/>
            <person name="Alex L.A."/>
            <person name="Mannhaupt G."/>
            <person name="Ebbole D.J."/>
            <person name="Freitag M."/>
            <person name="Paulsen I."/>
            <person name="Sachs M.S."/>
            <person name="Lander E.S."/>
            <person name="Nusbaum C."/>
            <person name="Birren B.W."/>
        </authorList>
    </citation>
    <scope>NUCLEOTIDE SEQUENCE [LARGE SCALE GENOMIC DNA]</scope>
    <source>
        <strain>ATCC 24698 / 74-OR23-1A / CBS 708.71 / DSM 1257 / FGSC 987</strain>
    </source>
</reference>
<sequence>MTDIDYKLEAVPATRIAADDIDKTFRSSTIDLISGALGGKVLGFSDEWFAEAANLLTPTAPIRQPGKMVYTGAWYDGWETRRHNPAEFDWVVIRLGVASGTVEGVEIDTAFFNGNHAPAISVEGCFSQNDDEVLSWKGERGGWETILGVQECGPSQRFGWKLENPTKKQYTHVRLNMYPDGGIARFRLFGHAVPVFPDNTDAIFDLAAAQNGGVAISCSDQHFGTKDNLILPGRGKDMGDGWETARSRTKGHVDWTIIRLGAPGYIQNFMVDTAHFRGNYPQQVKLQAIEWKSEGEPGADSEGWTEVVEPIKCGPDQEHPVESLVKDKPFTHVKLIIVPDGGVKRLRVFAKRAV</sequence>